<name>ZC12D_MOUSE</name>
<keyword id="KW-0963">Cytoplasm</keyword>
<keyword id="KW-0255">Endonuclease</keyword>
<keyword id="KW-0378">Hydrolase</keyword>
<keyword id="KW-0460">Magnesium</keyword>
<keyword id="KW-0479">Metal-binding</keyword>
<keyword id="KW-0540">Nuclease</keyword>
<keyword id="KW-1185">Reference proteome</keyword>
<keyword id="KW-0862">Zinc</keyword>
<keyword id="KW-0863">Zinc-finger</keyword>
<organism>
    <name type="scientific">Mus musculus</name>
    <name type="common">Mouse</name>
    <dbReference type="NCBI Taxonomy" id="10090"/>
    <lineage>
        <taxon>Eukaryota</taxon>
        <taxon>Metazoa</taxon>
        <taxon>Chordata</taxon>
        <taxon>Craniata</taxon>
        <taxon>Vertebrata</taxon>
        <taxon>Euteleostomi</taxon>
        <taxon>Mammalia</taxon>
        <taxon>Eutheria</taxon>
        <taxon>Euarchontoglires</taxon>
        <taxon>Glires</taxon>
        <taxon>Rodentia</taxon>
        <taxon>Myomorpha</taxon>
        <taxon>Muroidea</taxon>
        <taxon>Muridae</taxon>
        <taxon>Murinae</taxon>
        <taxon>Mus</taxon>
        <taxon>Mus</taxon>
    </lineage>
</organism>
<feature type="chain" id="PRO_0000348932" description="Probable ribonuclease ZC3H12D">
    <location>
        <begin position="1"/>
        <end position="533"/>
    </location>
</feature>
<feature type="domain" description="RNase NYN" evidence="4">
    <location>
        <begin position="92"/>
        <end position="246"/>
    </location>
</feature>
<feature type="zinc finger region" description="C3H1-type" evidence="5">
    <location>
        <begin position="251"/>
        <end position="282"/>
    </location>
</feature>
<feature type="region of interest" description="Necessary for interaction with ZC3H12A" evidence="1">
    <location>
        <begin position="262"/>
        <end position="368"/>
    </location>
</feature>
<feature type="region of interest" description="Disordered" evidence="6">
    <location>
        <begin position="302"/>
        <end position="335"/>
    </location>
</feature>
<feature type="sequence conflict" description="In Ref. 2; AAI12399." evidence="10" ref="2">
    <original>T</original>
    <variation>R</variation>
    <location>
        <position position="125"/>
    </location>
</feature>
<accession>Q8BIY3</accession>
<accession>A4FU74</accession>
<proteinExistence type="evidence at transcript level"/>
<evidence type="ECO:0000250" key="1">
    <source>
        <dbReference type="UniProtKB" id="A2A288"/>
    </source>
</evidence>
<evidence type="ECO:0000250" key="2">
    <source>
        <dbReference type="UniProtKB" id="A6QQJ8"/>
    </source>
</evidence>
<evidence type="ECO:0000250" key="3">
    <source>
        <dbReference type="UniProtKB" id="Q6ZRW2"/>
    </source>
</evidence>
<evidence type="ECO:0000255" key="4"/>
<evidence type="ECO:0000255" key="5">
    <source>
        <dbReference type="PROSITE-ProRule" id="PRU00723"/>
    </source>
</evidence>
<evidence type="ECO:0000256" key="6">
    <source>
        <dbReference type="SAM" id="MobiDB-lite"/>
    </source>
</evidence>
<evidence type="ECO:0000269" key="7">
    <source>
    </source>
</evidence>
<evidence type="ECO:0000269" key="8">
    <source>
    </source>
</evidence>
<evidence type="ECO:0000303" key="9">
    <source>
    </source>
</evidence>
<evidence type="ECO:0000305" key="10"/>
<evidence type="ECO:0000312" key="11">
    <source>
        <dbReference type="EMBL" id="AAI12399.1"/>
    </source>
</evidence>
<evidence type="ECO:0000312" key="12">
    <source>
        <dbReference type="EMBL" id="BAC35154.1"/>
    </source>
</evidence>
<evidence type="ECO:0000312" key="13">
    <source>
        <dbReference type="MGI" id="MGI:3045313"/>
    </source>
</evidence>
<protein>
    <recommendedName>
        <fullName>Probable ribonuclease ZC3H12D</fullName>
        <ecNumber>3.1.-.-</ecNumber>
    </recommendedName>
    <alternativeName>
        <fullName evidence="9">MCP-induced protein 4</fullName>
    </alternativeName>
    <alternativeName>
        <fullName>Transformed follicular lymphoma homolog</fullName>
    </alternativeName>
    <alternativeName>
        <fullName evidence="3">Zinc finger CCCH domain-containing protein 12D</fullName>
    </alternativeName>
</protein>
<gene>
    <name evidence="13" type="primary">Zc3h12d</name>
    <name evidence="9" type="synonym">Mcpip4</name>
    <name type="synonym">Tfl</name>
</gene>
<sequence>MEHRSKMEFFQKLGYSQEDVVRVLGKLGDSALVNDVLQELIQTGSRPRAQEDPASGTGVVLIPRGCCGVQDSAQQGPGTRPRRGWRRSSPLLRPIVIDGSNVAMSHGNKEAFSCRGIRLAVDWFTDRGHTYIKVFVPSWRKEPSRSDTPIREQHVLEELERQAVLVYTPSRKVNGKRVVCYDDRYIVKVAYEKDGIIVSNDNYRDLQNENPEWKWFIEQRLLMFSFVNDRFMPPDDPLGRRGPTLSNFLSKKPRPPEPSWQHCPYGKKCTYGVKCRFYHPERPHHGQLSVADELRAKTRAWLGGGAEEPRTPSARSRPTTARLLPQEPGEHDLPPAPQPAVLAALNRSFARLTFSDTAASGVVSQSRGPDWMPTGVPTSWAPPSLRAGSAATIGLPGMRSLRTPNNPLSPGDLGSPICPQARLSERHRSRDMHSDLPPQRRPLEDPWALLPSSYCYLNHSVWSESAWGEDIFRGPSESAQPVANGGGTRPVHCSFFPPDQDHPVMASGPPLSDMALLTLLQRSQKTGAPLGDP</sequence>
<comment type="function">
    <text evidence="1 8">May regulate cell growth likely by suppressing RB1 phosphorylation (By similarity). May function as RNase and regulate the levels of target RNA species (Potential). In association with ZC3H12A enhances the degradation of interleukin IL-6 mRNA level in activated macrophages (PubMed:26134560). Serve as a tumor suppressor in certain leukemia cells (By similarity). Overexpression inhibits the G1 to S phase progression through suppression of RB1 phosphorylation (By similarity).</text>
</comment>
<comment type="cofactor">
    <cofactor evidence="10">
        <name>Mg(2+)</name>
        <dbReference type="ChEBI" id="CHEBI:18420"/>
    </cofactor>
</comment>
<comment type="subunit">
    <text evidence="1">Interacts with ZC3H12A.</text>
</comment>
<comment type="subcellular location">
    <subcellularLocation>
        <location evidence="1">Cytoplasm</location>
    </subcellularLocation>
    <subcellularLocation>
        <location evidence="1">Cytoplasm</location>
        <location evidence="1">P-body</location>
    </subcellularLocation>
    <text evidence="1">Colocalizes with ZC3H12A in GW bodies (GWBs).</text>
</comment>
<comment type="tissue specificity">
    <text evidence="7">Expressed at low levels in bone marrow derived macrophages.</text>
</comment>
<comment type="similarity">
    <text evidence="2">Belongs to the ZC3H12 family.</text>
</comment>
<comment type="sequence caution" evidence="10">
    <conflict type="frameshift">
        <sequence resource="EMBL-CDS" id="AAI12399"/>
    </conflict>
</comment>
<comment type="sequence caution" evidence="10">
    <conflict type="frameshift">
        <sequence resource="EMBL-CDS" id="BAC35154"/>
    </conflict>
</comment>
<dbReference type="EC" id="3.1.-.-"/>
<dbReference type="EMBL" id="AK052806">
    <property type="protein sequence ID" value="BAC35154.1"/>
    <property type="status" value="ALT_FRAME"/>
    <property type="molecule type" value="mRNA"/>
</dbReference>
<dbReference type="EMBL" id="BC112398">
    <property type="protein sequence ID" value="AAI12399.1"/>
    <property type="status" value="ALT_FRAME"/>
    <property type="molecule type" value="mRNA"/>
</dbReference>
<dbReference type="CCDS" id="CCDS48496.1"/>
<dbReference type="RefSeq" id="NP_766373.2">
    <property type="nucleotide sequence ID" value="NM_172785.3"/>
</dbReference>
<dbReference type="SMR" id="Q8BIY3"/>
<dbReference type="BioGRID" id="231859">
    <property type="interactions" value="1"/>
</dbReference>
<dbReference type="FunCoup" id="Q8BIY3">
    <property type="interactions" value="127"/>
</dbReference>
<dbReference type="IntAct" id="Q8BIY3">
    <property type="interactions" value="1"/>
</dbReference>
<dbReference type="STRING" id="10090.ENSMUSP00000040217"/>
<dbReference type="iPTMnet" id="Q8BIY3"/>
<dbReference type="PhosphoSitePlus" id="Q8BIY3"/>
<dbReference type="jPOST" id="Q8BIY3"/>
<dbReference type="PaxDb" id="10090-ENSMUSP00000040217"/>
<dbReference type="PeptideAtlas" id="Q8BIY3"/>
<dbReference type="ProteomicsDB" id="275057"/>
<dbReference type="DNASU" id="237256"/>
<dbReference type="GeneID" id="237256"/>
<dbReference type="KEGG" id="mmu:237256"/>
<dbReference type="AGR" id="MGI:3045313"/>
<dbReference type="CTD" id="340152"/>
<dbReference type="MGI" id="MGI:3045313">
    <property type="gene designation" value="Zc3h12d"/>
</dbReference>
<dbReference type="eggNOG" id="KOG3777">
    <property type="taxonomic scope" value="Eukaryota"/>
</dbReference>
<dbReference type="InParanoid" id="Q8BIY3"/>
<dbReference type="OrthoDB" id="392925at2759"/>
<dbReference type="PhylomeDB" id="Q8BIY3"/>
<dbReference type="BioGRID-ORCS" id="237256">
    <property type="hits" value="1 hit in 78 CRISPR screens"/>
</dbReference>
<dbReference type="PRO" id="PR:Q8BIY3"/>
<dbReference type="Proteomes" id="UP000000589">
    <property type="component" value="Unplaced"/>
</dbReference>
<dbReference type="RNAct" id="Q8BIY3">
    <property type="molecule type" value="protein"/>
</dbReference>
<dbReference type="GO" id="GO:0005737">
    <property type="term" value="C:cytoplasm"/>
    <property type="evidence" value="ECO:0000250"/>
    <property type="project" value="UniProtKB"/>
</dbReference>
<dbReference type="GO" id="GO:0000932">
    <property type="term" value="C:P-body"/>
    <property type="evidence" value="ECO:0000250"/>
    <property type="project" value="UniProtKB"/>
</dbReference>
<dbReference type="GO" id="GO:0004519">
    <property type="term" value="F:endonuclease activity"/>
    <property type="evidence" value="ECO:0007669"/>
    <property type="project" value="UniProtKB-KW"/>
</dbReference>
<dbReference type="GO" id="GO:0008270">
    <property type="term" value="F:zinc ion binding"/>
    <property type="evidence" value="ECO:0007669"/>
    <property type="project" value="UniProtKB-KW"/>
</dbReference>
<dbReference type="GO" id="GO:0061158">
    <property type="term" value="P:3'-UTR-mediated mRNA destabilization"/>
    <property type="evidence" value="ECO:0000314"/>
    <property type="project" value="UniProtKB"/>
</dbReference>
<dbReference type="GO" id="GO:0006402">
    <property type="term" value="P:mRNA catabolic process"/>
    <property type="evidence" value="ECO:0000315"/>
    <property type="project" value="MGI"/>
</dbReference>
<dbReference type="GO" id="GO:0030308">
    <property type="term" value="P:negative regulation of cell growth"/>
    <property type="evidence" value="ECO:0000250"/>
    <property type="project" value="UniProtKB"/>
</dbReference>
<dbReference type="GO" id="GO:2000134">
    <property type="term" value="P:negative regulation of G1/S transition of mitotic cell cycle"/>
    <property type="evidence" value="ECO:0000250"/>
    <property type="project" value="UniProtKB"/>
</dbReference>
<dbReference type="GO" id="GO:0042130">
    <property type="term" value="P:negative regulation of T cell proliferation"/>
    <property type="evidence" value="ECO:0000315"/>
    <property type="project" value="MGI"/>
</dbReference>
<dbReference type="GO" id="GO:0042098">
    <property type="term" value="P:T cell proliferation"/>
    <property type="evidence" value="ECO:0000315"/>
    <property type="project" value="MGI"/>
</dbReference>
<dbReference type="CDD" id="cd18729">
    <property type="entry name" value="PIN_Zc3h12-like"/>
    <property type="match status" value="1"/>
</dbReference>
<dbReference type="FunFam" id="3.40.50.11980:FF:000001">
    <property type="entry name" value="ZC3H12A isoform 1"/>
    <property type="match status" value="1"/>
</dbReference>
<dbReference type="Gene3D" id="3.40.50.11980">
    <property type="match status" value="1"/>
</dbReference>
<dbReference type="InterPro" id="IPR040546">
    <property type="entry name" value="Rege-1_UBA-like"/>
</dbReference>
<dbReference type="InterPro" id="IPR021869">
    <property type="entry name" value="RNase_Zc3h12_NYN"/>
</dbReference>
<dbReference type="InterPro" id="IPR051101">
    <property type="entry name" value="ZC3H12/N4BP1_RNase_Reg"/>
</dbReference>
<dbReference type="InterPro" id="IPR000571">
    <property type="entry name" value="Znf_CCCH"/>
</dbReference>
<dbReference type="PANTHER" id="PTHR12876">
    <property type="entry name" value="N4BP1-RELATED"/>
    <property type="match status" value="1"/>
</dbReference>
<dbReference type="PANTHER" id="PTHR12876:SF11">
    <property type="entry name" value="RIBONUCLEASE ZC3H12D-RELATED"/>
    <property type="match status" value="1"/>
</dbReference>
<dbReference type="Pfam" id="PF11977">
    <property type="entry name" value="RNase_Zc3h12a"/>
    <property type="match status" value="1"/>
</dbReference>
<dbReference type="Pfam" id="PF18039">
    <property type="entry name" value="UBA_6"/>
    <property type="match status" value="1"/>
</dbReference>
<dbReference type="PROSITE" id="PS50103">
    <property type="entry name" value="ZF_C3H1"/>
    <property type="match status" value="1"/>
</dbReference>
<reference evidence="12" key="1">
    <citation type="journal article" date="2005" name="Science">
        <title>The transcriptional landscape of the mammalian genome.</title>
        <authorList>
            <person name="Carninci P."/>
            <person name="Kasukawa T."/>
            <person name="Katayama S."/>
            <person name="Gough J."/>
            <person name="Frith M.C."/>
            <person name="Maeda N."/>
            <person name="Oyama R."/>
            <person name="Ravasi T."/>
            <person name="Lenhard B."/>
            <person name="Wells C."/>
            <person name="Kodzius R."/>
            <person name="Shimokawa K."/>
            <person name="Bajic V.B."/>
            <person name="Brenner S.E."/>
            <person name="Batalov S."/>
            <person name="Forrest A.R."/>
            <person name="Zavolan M."/>
            <person name="Davis M.J."/>
            <person name="Wilming L.G."/>
            <person name="Aidinis V."/>
            <person name="Allen J.E."/>
            <person name="Ambesi-Impiombato A."/>
            <person name="Apweiler R."/>
            <person name="Aturaliya R.N."/>
            <person name="Bailey T.L."/>
            <person name="Bansal M."/>
            <person name="Baxter L."/>
            <person name="Beisel K.W."/>
            <person name="Bersano T."/>
            <person name="Bono H."/>
            <person name="Chalk A.M."/>
            <person name="Chiu K.P."/>
            <person name="Choudhary V."/>
            <person name="Christoffels A."/>
            <person name="Clutterbuck D.R."/>
            <person name="Crowe M.L."/>
            <person name="Dalla E."/>
            <person name="Dalrymple B.P."/>
            <person name="de Bono B."/>
            <person name="Della Gatta G."/>
            <person name="di Bernardo D."/>
            <person name="Down T."/>
            <person name="Engstrom P."/>
            <person name="Fagiolini M."/>
            <person name="Faulkner G."/>
            <person name="Fletcher C.F."/>
            <person name="Fukushima T."/>
            <person name="Furuno M."/>
            <person name="Futaki S."/>
            <person name="Gariboldi M."/>
            <person name="Georgii-Hemming P."/>
            <person name="Gingeras T.R."/>
            <person name="Gojobori T."/>
            <person name="Green R.E."/>
            <person name="Gustincich S."/>
            <person name="Harbers M."/>
            <person name="Hayashi Y."/>
            <person name="Hensch T.K."/>
            <person name="Hirokawa N."/>
            <person name="Hill D."/>
            <person name="Huminiecki L."/>
            <person name="Iacono M."/>
            <person name="Ikeo K."/>
            <person name="Iwama A."/>
            <person name="Ishikawa T."/>
            <person name="Jakt M."/>
            <person name="Kanapin A."/>
            <person name="Katoh M."/>
            <person name="Kawasawa Y."/>
            <person name="Kelso J."/>
            <person name="Kitamura H."/>
            <person name="Kitano H."/>
            <person name="Kollias G."/>
            <person name="Krishnan S.P."/>
            <person name="Kruger A."/>
            <person name="Kummerfeld S.K."/>
            <person name="Kurochkin I.V."/>
            <person name="Lareau L.F."/>
            <person name="Lazarevic D."/>
            <person name="Lipovich L."/>
            <person name="Liu J."/>
            <person name="Liuni S."/>
            <person name="McWilliam S."/>
            <person name="Madan Babu M."/>
            <person name="Madera M."/>
            <person name="Marchionni L."/>
            <person name="Matsuda H."/>
            <person name="Matsuzawa S."/>
            <person name="Miki H."/>
            <person name="Mignone F."/>
            <person name="Miyake S."/>
            <person name="Morris K."/>
            <person name="Mottagui-Tabar S."/>
            <person name="Mulder N."/>
            <person name="Nakano N."/>
            <person name="Nakauchi H."/>
            <person name="Ng P."/>
            <person name="Nilsson R."/>
            <person name="Nishiguchi S."/>
            <person name="Nishikawa S."/>
            <person name="Nori F."/>
            <person name="Ohara O."/>
            <person name="Okazaki Y."/>
            <person name="Orlando V."/>
            <person name="Pang K.C."/>
            <person name="Pavan W.J."/>
            <person name="Pavesi G."/>
            <person name="Pesole G."/>
            <person name="Petrovsky N."/>
            <person name="Piazza S."/>
            <person name="Reed J."/>
            <person name="Reid J.F."/>
            <person name="Ring B.Z."/>
            <person name="Ringwald M."/>
            <person name="Rost B."/>
            <person name="Ruan Y."/>
            <person name="Salzberg S.L."/>
            <person name="Sandelin A."/>
            <person name="Schneider C."/>
            <person name="Schoenbach C."/>
            <person name="Sekiguchi K."/>
            <person name="Semple C.A."/>
            <person name="Seno S."/>
            <person name="Sessa L."/>
            <person name="Sheng Y."/>
            <person name="Shibata Y."/>
            <person name="Shimada H."/>
            <person name="Shimada K."/>
            <person name="Silva D."/>
            <person name="Sinclair B."/>
            <person name="Sperling S."/>
            <person name="Stupka E."/>
            <person name="Sugiura K."/>
            <person name="Sultana R."/>
            <person name="Takenaka Y."/>
            <person name="Taki K."/>
            <person name="Tammoja K."/>
            <person name="Tan S.L."/>
            <person name="Tang S."/>
            <person name="Taylor M.S."/>
            <person name="Tegner J."/>
            <person name="Teichmann S.A."/>
            <person name="Ueda H.R."/>
            <person name="van Nimwegen E."/>
            <person name="Verardo R."/>
            <person name="Wei C.L."/>
            <person name="Yagi K."/>
            <person name="Yamanishi H."/>
            <person name="Zabarovsky E."/>
            <person name="Zhu S."/>
            <person name="Zimmer A."/>
            <person name="Hide W."/>
            <person name="Bult C."/>
            <person name="Grimmond S.M."/>
            <person name="Teasdale R.D."/>
            <person name="Liu E.T."/>
            <person name="Brusic V."/>
            <person name="Quackenbush J."/>
            <person name="Wahlestedt C."/>
            <person name="Mattick J.S."/>
            <person name="Hume D.A."/>
            <person name="Kai C."/>
            <person name="Sasaki D."/>
            <person name="Tomaru Y."/>
            <person name="Fukuda S."/>
            <person name="Kanamori-Katayama M."/>
            <person name="Suzuki M."/>
            <person name="Aoki J."/>
            <person name="Arakawa T."/>
            <person name="Iida J."/>
            <person name="Imamura K."/>
            <person name="Itoh M."/>
            <person name="Kato T."/>
            <person name="Kawaji H."/>
            <person name="Kawagashira N."/>
            <person name="Kawashima T."/>
            <person name="Kojima M."/>
            <person name="Kondo S."/>
            <person name="Konno H."/>
            <person name="Nakano K."/>
            <person name="Ninomiya N."/>
            <person name="Nishio T."/>
            <person name="Okada M."/>
            <person name="Plessy C."/>
            <person name="Shibata K."/>
            <person name="Shiraki T."/>
            <person name="Suzuki S."/>
            <person name="Tagami M."/>
            <person name="Waki K."/>
            <person name="Watahiki A."/>
            <person name="Okamura-Oho Y."/>
            <person name="Suzuki H."/>
            <person name="Kawai J."/>
            <person name="Hayashizaki Y."/>
        </authorList>
    </citation>
    <scope>NUCLEOTIDE SEQUENCE [LARGE SCALE MRNA]</scope>
    <source>
        <strain evidence="12">C57BL/6J</strain>
        <tissue evidence="12">Mammary gland</tissue>
    </source>
</reference>
<reference evidence="11" key="2">
    <citation type="journal article" date="2004" name="Genome Res.">
        <title>The status, quality, and expansion of the NIH full-length cDNA project: the Mammalian Gene Collection (MGC).</title>
        <authorList>
            <consortium name="The MGC Project Team"/>
        </authorList>
    </citation>
    <scope>NUCLEOTIDE SEQUENCE [LARGE SCALE MRNA] OF 20-527</scope>
</reference>
<reference evidence="10" key="3">
    <citation type="journal article" date="2008" name="J. Biol. Chem.">
        <title>A novel CCCH-zinc finger protein family regulates proinflammatory activation of macrophages.</title>
        <authorList>
            <person name="Liang J."/>
            <person name="Wang J."/>
            <person name="Azfer A."/>
            <person name="Song W."/>
            <person name="Tromp G."/>
            <person name="Kolattukudy P.E."/>
            <person name="Fu M."/>
        </authorList>
    </citation>
    <scope>IDENTIFICATION</scope>
    <scope>TISSUE SPECIFICITY</scope>
</reference>
<reference key="4">
    <citation type="journal article" date="2015" name="J. Biol. Chem.">
        <title>Monocyte chemotactic protein-induced protein 1 and 4 form a complex but act independently in regulation of interleukin-6 mRNA degradation.</title>
        <authorList>
            <person name="Huang S."/>
            <person name="Liu S."/>
            <person name="Fu J.J."/>
            <person name="Tony Wang T."/>
            <person name="Yao X."/>
            <person name="Kumar A."/>
            <person name="Liu G."/>
            <person name="Fu M."/>
        </authorList>
    </citation>
    <scope>FUNCTION</scope>
</reference>